<evidence type="ECO:0000255" key="1">
    <source>
        <dbReference type="HAMAP-Rule" id="MF_00151"/>
    </source>
</evidence>
<protein>
    <recommendedName>
        <fullName evidence="1">Phosphopantetheine adenylyltransferase</fullName>
        <ecNumber evidence="1">2.7.7.3</ecNumber>
    </recommendedName>
    <alternativeName>
        <fullName evidence="1">Dephospho-CoA pyrophosphorylase</fullName>
    </alternativeName>
    <alternativeName>
        <fullName evidence="1">Pantetheine-phosphate adenylyltransferase</fullName>
        <shortName evidence="1">PPAT</shortName>
    </alternativeName>
</protein>
<comment type="function">
    <text evidence="1">Reversibly transfers an adenylyl group from ATP to 4'-phosphopantetheine, yielding dephospho-CoA (dPCoA) and pyrophosphate.</text>
</comment>
<comment type="catalytic activity">
    <reaction evidence="1">
        <text>(R)-4'-phosphopantetheine + ATP + H(+) = 3'-dephospho-CoA + diphosphate</text>
        <dbReference type="Rhea" id="RHEA:19801"/>
        <dbReference type="ChEBI" id="CHEBI:15378"/>
        <dbReference type="ChEBI" id="CHEBI:30616"/>
        <dbReference type="ChEBI" id="CHEBI:33019"/>
        <dbReference type="ChEBI" id="CHEBI:57328"/>
        <dbReference type="ChEBI" id="CHEBI:61723"/>
        <dbReference type="EC" id="2.7.7.3"/>
    </reaction>
</comment>
<comment type="cofactor">
    <cofactor evidence="1">
        <name>Mg(2+)</name>
        <dbReference type="ChEBI" id="CHEBI:18420"/>
    </cofactor>
</comment>
<comment type="pathway">
    <text evidence="1">Cofactor biosynthesis; coenzyme A biosynthesis; CoA from (R)-pantothenate: step 4/5.</text>
</comment>
<comment type="subunit">
    <text evidence="1">Homohexamer.</text>
</comment>
<comment type="subcellular location">
    <subcellularLocation>
        <location evidence="1">Cytoplasm</location>
    </subcellularLocation>
</comment>
<comment type="similarity">
    <text evidence="1">Belongs to the bacterial CoaD family.</text>
</comment>
<sequence>MNRAAIYPGSFDPLTNGHLAIIQRGLNLFDRLVVAVANNPQKSPMFTVDERKALIREAVGNDPRVEVDSFDGLMVDYARTRGIPKVLRGLRAVSDFEYEFQLANMNKKLLPEFESVFVMTGEDYFFVSARLVREVAQFGGNVEGLVPANVLEALQRKLGRPPRS</sequence>
<keyword id="KW-0067">ATP-binding</keyword>
<keyword id="KW-0173">Coenzyme A biosynthesis</keyword>
<keyword id="KW-0963">Cytoplasm</keyword>
<keyword id="KW-0460">Magnesium</keyword>
<keyword id="KW-0547">Nucleotide-binding</keyword>
<keyword id="KW-0548">Nucleotidyltransferase</keyword>
<keyword id="KW-0808">Transferase</keyword>
<organism>
    <name type="scientific">Anaeromyxobacter sp. (strain K)</name>
    <dbReference type="NCBI Taxonomy" id="447217"/>
    <lineage>
        <taxon>Bacteria</taxon>
        <taxon>Pseudomonadati</taxon>
        <taxon>Myxococcota</taxon>
        <taxon>Myxococcia</taxon>
        <taxon>Myxococcales</taxon>
        <taxon>Cystobacterineae</taxon>
        <taxon>Anaeromyxobacteraceae</taxon>
        <taxon>Anaeromyxobacter</taxon>
    </lineage>
</organism>
<feature type="chain" id="PRO_1000096761" description="Phosphopantetheine adenylyltransferase">
    <location>
        <begin position="1"/>
        <end position="164"/>
    </location>
</feature>
<feature type="binding site" evidence="1">
    <location>
        <begin position="10"/>
        <end position="11"/>
    </location>
    <ligand>
        <name>ATP</name>
        <dbReference type="ChEBI" id="CHEBI:30616"/>
    </ligand>
</feature>
<feature type="binding site" evidence="1">
    <location>
        <position position="10"/>
    </location>
    <ligand>
        <name>substrate</name>
    </ligand>
</feature>
<feature type="binding site" evidence="1">
    <location>
        <position position="18"/>
    </location>
    <ligand>
        <name>ATP</name>
        <dbReference type="ChEBI" id="CHEBI:30616"/>
    </ligand>
</feature>
<feature type="binding site" evidence="1">
    <location>
        <position position="42"/>
    </location>
    <ligand>
        <name>substrate</name>
    </ligand>
</feature>
<feature type="binding site" evidence="1">
    <location>
        <position position="74"/>
    </location>
    <ligand>
        <name>substrate</name>
    </ligand>
</feature>
<feature type="binding site" evidence="1">
    <location>
        <position position="88"/>
    </location>
    <ligand>
        <name>substrate</name>
    </ligand>
</feature>
<feature type="binding site" evidence="1">
    <location>
        <begin position="89"/>
        <end position="91"/>
    </location>
    <ligand>
        <name>ATP</name>
        <dbReference type="ChEBI" id="CHEBI:30616"/>
    </ligand>
</feature>
<feature type="binding site" evidence="1">
    <location>
        <position position="99"/>
    </location>
    <ligand>
        <name>ATP</name>
        <dbReference type="ChEBI" id="CHEBI:30616"/>
    </ligand>
</feature>
<feature type="binding site" evidence="1">
    <location>
        <begin position="124"/>
        <end position="130"/>
    </location>
    <ligand>
        <name>ATP</name>
        <dbReference type="ChEBI" id="CHEBI:30616"/>
    </ligand>
</feature>
<feature type="site" description="Transition state stabilizer" evidence="1">
    <location>
        <position position="18"/>
    </location>
</feature>
<proteinExistence type="inferred from homology"/>
<gene>
    <name evidence="1" type="primary">coaD</name>
    <name type="ordered locus">AnaeK_2115</name>
</gene>
<reference key="1">
    <citation type="submission" date="2008-08" db="EMBL/GenBank/DDBJ databases">
        <title>Complete sequence of Anaeromyxobacter sp. K.</title>
        <authorList>
            <consortium name="US DOE Joint Genome Institute"/>
            <person name="Lucas S."/>
            <person name="Copeland A."/>
            <person name="Lapidus A."/>
            <person name="Glavina del Rio T."/>
            <person name="Dalin E."/>
            <person name="Tice H."/>
            <person name="Bruce D."/>
            <person name="Goodwin L."/>
            <person name="Pitluck S."/>
            <person name="Saunders E."/>
            <person name="Brettin T."/>
            <person name="Detter J.C."/>
            <person name="Han C."/>
            <person name="Larimer F."/>
            <person name="Land M."/>
            <person name="Hauser L."/>
            <person name="Kyrpides N."/>
            <person name="Ovchinnikiva G."/>
            <person name="Beliaev A."/>
        </authorList>
    </citation>
    <scope>NUCLEOTIDE SEQUENCE [LARGE SCALE GENOMIC DNA]</scope>
    <source>
        <strain>K</strain>
    </source>
</reference>
<dbReference type="EC" id="2.7.7.3" evidence="1"/>
<dbReference type="EMBL" id="CP001131">
    <property type="protein sequence ID" value="ACG73342.1"/>
    <property type="molecule type" value="Genomic_DNA"/>
</dbReference>
<dbReference type="RefSeq" id="WP_012526143.1">
    <property type="nucleotide sequence ID" value="NC_011145.1"/>
</dbReference>
<dbReference type="SMR" id="B4UCU5"/>
<dbReference type="KEGG" id="ank:AnaeK_2115"/>
<dbReference type="HOGENOM" id="CLU_100149_0_1_7"/>
<dbReference type="OrthoDB" id="9806661at2"/>
<dbReference type="UniPathway" id="UPA00241">
    <property type="reaction ID" value="UER00355"/>
</dbReference>
<dbReference type="Proteomes" id="UP000001871">
    <property type="component" value="Chromosome"/>
</dbReference>
<dbReference type="GO" id="GO:0005737">
    <property type="term" value="C:cytoplasm"/>
    <property type="evidence" value="ECO:0007669"/>
    <property type="project" value="UniProtKB-SubCell"/>
</dbReference>
<dbReference type="GO" id="GO:0005524">
    <property type="term" value="F:ATP binding"/>
    <property type="evidence" value="ECO:0007669"/>
    <property type="project" value="UniProtKB-KW"/>
</dbReference>
<dbReference type="GO" id="GO:0004595">
    <property type="term" value="F:pantetheine-phosphate adenylyltransferase activity"/>
    <property type="evidence" value="ECO:0007669"/>
    <property type="project" value="UniProtKB-UniRule"/>
</dbReference>
<dbReference type="GO" id="GO:0015937">
    <property type="term" value="P:coenzyme A biosynthetic process"/>
    <property type="evidence" value="ECO:0007669"/>
    <property type="project" value="UniProtKB-UniRule"/>
</dbReference>
<dbReference type="CDD" id="cd02163">
    <property type="entry name" value="PPAT"/>
    <property type="match status" value="1"/>
</dbReference>
<dbReference type="Gene3D" id="3.40.50.620">
    <property type="entry name" value="HUPs"/>
    <property type="match status" value="1"/>
</dbReference>
<dbReference type="HAMAP" id="MF_00151">
    <property type="entry name" value="PPAT_bact"/>
    <property type="match status" value="1"/>
</dbReference>
<dbReference type="InterPro" id="IPR004821">
    <property type="entry name" value="Cyt_trans-like"/>
</dbReference>
<dbReference type="InterPro" id="IPR001980">
    <property type="entry name" value="PPAT"/>
</dbReference>
<dbReference type="InterPro" id="IPR014729">
    <property type="entry name" value="Rossmann-like_a/b/a_fold"/>
</dbReference>
<dbReference type="NCBIfam" id="TIGR01510">
    <property type="entry name" value="coaD_prev_kdtB"/>
    <property type="match status" value="1"/>
</dbReference>
<dbReference type="NCBIfam" id="TIGR00125">
    <property type="entry name" value="cyt_tran_rel"/>
    <property type="match status" value="1"/>
</dbReference>
<dbReference type="PANTHER" id="PTHR21342">
    <property type="entry name" value="PHOSPHOPANTETHEINE ADENYLYLTRANSFERASE"/>
    <property type="match status" value="1"/>
</dbReference>
<dbReference type="PANTHER" id="PTHR21342:SF1">
    <property type="entry name" value="PHOSPHOPANTETHEINE ADENYLYLTRANSFERASE"/>
    <property type="match status" value="1"/>
</dbReference>
<dbReference type="Pfam" id="PF01467">
    <property type="entry name" value="CTP_transf_like"/>
    <property type="match status" value="1"/>
</dbReference>
<dbReference type="PRINTS" id="PR01020">
    <property type="entry name" value="LPSBIOSNTHSS"/>
</dbReference>
<dbReference type="SUPFAM" id="SSF52374">
    <property type="entry name" value="Nucleotidylyl transferase"/>
    <property type="match status" value="1"/>
</dbReference>
<name>COAD_ANASK</name>
<accession>B4UCU5</accession>